<dbReference type="EMBL" id="CP000668">
    <property type="protein sequence ID" value="ABP40964.1"/>
    <property type="status" value="ALT_INIT"/>
    <property type="molecule type" value="Genomic_DNA"/>
</dbReference>
<dbReference type="RefSeq" id="WP_002210714.1">
    <property type="nucleotide sequence ID" value="NZ_CP009715.1"/>
</dbReference>
<dbReference type="SMR" id="A4TNV2"/>
<dbReference type="GeneID" id="57977237"/>
<dbReference type="KEGG" id="ypp:YPDSF_2596"/>
<dbReference type="PATRIC" id="fig|386656.14.peg.4117"/>
<dbReference type="GO" id="GO:0005829">
    <property type="term" value="C:cytosol"/>
    <property type="evidence" value="ECO:0007669"/>
    <property type="project" value="TreeGrafter"/>
</dbReference>
<dbReference type="GO" id="GO:0003723">
    <property type="term" value="F:RNA binding"/>
    <property type="evidence" value="ECO:0007669"/>
    <property type="project" value="UniProtKB-UniRule"/>
</dbReference>
<dbReference type="GO" id="GO:0070929">
    <property type="term" value="P:trans-translation"/>
    <property type="evidence" value="ECO:0007669"/>
    <property type="project" value="UniProtKB-UniRule"/>
</dbReference>
<dbReference type="CDD" id="cd09294">
    <property type="entry name" value="SmpB"/>
    <property type="match status" value="1"/>
</dbReference>
<dbReference type="Gene3D" id="2.40.280.10">
    <property type="match status" value="1"/>
</dbReference>
<dbReference type="HAMAP" id="MF_00023">
    <property type="entry name" value="SmpB"/>
    <property type="match status" value="1"/>
</dbReference>
<dbReference type="InterPro" id="IPR023620">
    <property type="entry name" value="SmpB"/>
</dbReference>
<dbReference type="InterPro" id="IPR000037">
    <property type="entry name" value="SsrA-bd_prot"/>
</dbReference>
<dbReference type="InterPro" id="IPR020081">
    <property type="entry name" value="SsrA-bd_prot_CS"/>
</dbReference>
<dbReference type="NCBIfam" id="NF003843">
    <property type="entry name" value="PRK05422.1"/>
    <property type="match status" value="1"/>
</dbReference>
<dbReference type="NCBIfam" id="TIGR00086">
    <property type="entry name" value="smpB"/>
    <property type="match status" value="1"/>
</dbReference>
<dbReference type="PANTHER" id="PTHR30308:SF2">
    <property type="entry name" value="SSRA-BINDING PROTEIN"/>
    <property type="match status" value="1"/>
</dbReference>
<dbReference type="PANTHER" id="PTHR30308">
    <property type="entry name" value="TMRNA-BINDING COMPONENT OF TRANS-TRANSLATION TAGGING COMPLEX"/>
    <property type="match status" value="1"/>
</dbReference>
<dbReference type="Pfam" id="PF01668">
    <property type="entry name" value="SmpB"/>
    <property type="match status" value="1"/>
</dbReference>
<dbReference type="SUPFAM" id="SSF74982">
    <property type="entry name" value="Small protein B (SmpB)"/>
    <property type="match status" value="1"/>
</dbReference>
<dbReference type="PROSITE" id="PS01317">
    <property type="entry name" value="SSRP"/>
    <property type="match status" value="1"/>
</dbReference>
<evidence type="ECO:0000255" key="1">
    <source>
        <dbReference type="HAMAP-Rule" id="MF_00023"/>
    </source>
</evidence>
<evidence type="ECO:0000305" key="2"/>
<sequence>MTKKKAYKPGSATIAQNKRARHEYFIEEEFEAGLALQGWEVKSLRAGKANISDSYVMFKNGEAFLFGATITPLNVASTHVVCEPMRTRKLLLNKRELDSLFGRVNREGYTVVALSMYWKNAWVKVKIGVAKGKKDNDKRDDIRDREWKLDKARIMKHANR</sequence>
<comment type="function">
    <text evidence="1">Required for rescue of stalled ribosomes mediated by trans-translation. Binds to transfer-messenger RNA (tmRNA), required for stable association of tmRNA with ribosomes. tmRNA and SmpB together mimic tRNA shape, replacing the anticodon stem-loop with SmpB. tmRNA is encoded by the ssrA gene; the 2 termini fold to resemble tRNA(Ala) and it encodes a 'tag peptide', a short internal open reading frame. During trans-translation Ala-aminoacylated tmRNA acts like a tRNA, entering the A-site of stalled ribosomes, displacing the stalled mRNA. The ribosome then switches to translate the ORF on the tmRNA; the nascent peptide is terminated with the 'tag peptide' encoded by the tmRNA and targeted for degradation. The ribosome is freed to recommence translation, which seems to be the essential function of trans-translation.</text>
</comment>
<comment type="subcellular location">
    <subcellularLocation>
        <location evidence="1">Cytoplasm</location>
    </subcellularLocation>
    <text evidence="1">The tmRNA-SmpB complex associates with stalled 70S ribosomes.</text>
</comment>
<comment type="similarity">
    <text evidence="1">Belongs to the SmpB family.</text>
</comment>
<comment type="sequence caution" evidence="2">
    <conflict type="erroneous initiation">
        <sequence resource="EMBL-CDS" id="ABP40964"/>
    </conflict>
    <text>Extended N-terminus.</text>
</comment>
<name>SSRP_YERPP</name>
<organism>
    <name type="scientific">Yersinia pestis (strain Pestoides F)</name>
    <dbReference type="NCBI Taxonomy" id="386656"/>
    <lineage>
        <taxon>Bacteria</taxon>
        <taxon>Pseudomonadati</taxon>
        <taxon>Pseudomonadota</taxon>
        <taxon>Gammaproteobacteria</taxon>
        <taxon>Enterobacterales</taxon>
        <taxon>Yersiniaceae</taxon>
        <taxon>Yersinia</taxon>
    </lineage>
</organism>
<feature type="chain" id="PRO_0000331113" description="SsrA-binding protein">
    <location>
        <begin position="1"/>
        <end position="160"/>
    </location>
</feature>
<reference key="1">
    <citation type="submission" date="2007-02" db="EMBL/GenBank/DDBJ databases">
        <title>Complete sequence of chromosome of Yersinia pestis Pestoides F.</title>
        <authorList>
            <consortium name="US DOE Joint Genome Institute"/>
            <person name="Copeland A."/>
            <person name="Lucas S."/>
            <person name="Lapidus A."/>
            <person name="Barry K."/>
            <person name="Detter J.C."/>
            <person name="Glavina del Rio T."/>
            <person name="Hammon N."/>
            <person name="Israni S."/>
            <person name="Dalin E."/>
            <person name="Tice H."/>
            <person name="Pitluck S."/>
            <person name="Di Bartolo G."/>
            <person name="Chain P."/>
            <person name="Malfatti S."/>
            <person name="Shin M."/>
            <person name="Vergez L."/>
            <person name="Schmutz J."/>
            <person name="Larimer F."/>
            <person name="Land M."/>
            <person name="Hauser L."/>
            <person name="Worsham P."/>
            <person name="Chu M."/>
            <person name="Bearden S."/>
            <person name="Garcia E."/>
            <person name="Richardson P."/>
        </authorList>
    </citation>
    <scope>NUCLEOTIDE SEQUENCE [LARGE SCALE GENOMIC DNA]</scope>
    <source>
        <strain>Pestoides F</strain>
    </source>
</reference>
<keyword id="KW-0963">Cytoplasm</keyword>
<keyword id="KW-0694">RNA-binding</keyword>
<gene>
    <name evidence="1" type="primary">smpB</name>
    <name type="ordered locus">YPDSF_2596</name>
</gene>
<proteinExistence type="inferred from homology"/>
<accession>A4TNV2</accession>
<protein>
    <recommendedName>
        <fullName evidence="1">SsrA-binding protein</fullName>
    </recommendedName>
    <alternativeName>
        <fullName evidence="1">Small protein B</fullName>
    </alternativeName>
</protein>